<protein>
    <recommendedName>
        <fullName>Pheromone-regulated membrane protein 5</fullName>
    </recommendedName>
</protein>
<comment type="subcellular location">
    <subcellularLocation>
        <location evidence="4">Membrane</location>
        <topology evidence="4">Single-pass membrane protein</topology>
    </subcellularLocation>
</comment>
<comment type="similarity">
    <text evidence="4">Belongs to the PRM5 family.</text>
</comment>
<accession>B3LTW4</accession>
<organism>
    <name type="scientific">Saccharomyces cerevisiae (strain RM11-1a)</name>
    <name type="common">Baker's yeast</name>
    <dbReference type="NCBI Taxonomy" id="285006"/>
    <lineage>
        <taxon>Eukaryota</taxon>
        <taxon>Fungi</taxon>
        <taxon>Dikarya</taxon>
        <taxon>Ascomycota</taxon>
        <taxon>Saccharomycotina</taxon>
        <taxon>Saccharomycetes</taxon>
        <taxon>Saccharomycetales</taxon>
        <taxon>Saccharomycetaceae</taxon>
        <taxon>Saccharomyces</taxon>
    </lineage>
</organism>
<evidence type="ECO:0000250" key="1">
    <source>
        <dbReference type="UniProtKB" id="P40476"/>
    </source>
</evidence>
<evidence type="ECO:0000255" key="2"/>
<evidence type="ECO:0000256" key="3">
    <source>
        <dbReference type="SAM" id="MobiDB-lite"/>
    </source>
</evidence>
<evidence type="ECO:0000305" key="4"/>
<feature type="chain" id="PRO_0000409310" description="Pheromone-regulated membrane protein 5">
    <location>
        <begin position="1"/>
        <end position="318"/>
    </location>
</feature>
<feature type="transmembrane region" description="Helical" evidence="2">
    <location>
        <begin position="78"/>
        <end position="98"/>
    </location>
</feature>
<feature type="region of interest" description="Disordered" evidence="3">
    <location>
        <begin position="238"/>
        <end position="318"/>
    </location>
</feature>
<feature type="compositionally biased region" description="Low complexity" evidence="3">
    <location>
        <begin position="238"/>
        <end position="247"/>
    </location>
</feature>
<feature type="compositionally biased region" description="Basic and acidic residues" evidence="3">
    <location>
        <begin position="250"/>
        <end position="261"/>
    </location>
</feature>
<feature type="compositionally biased region" description="Polar residues" evidence="3">
    <location>
        <begin position="276"/>
        <end position="285"/>
    </location>
</feature>
<feature type="compositionally biased region" description="Basic and acidic residues" evidence="3">
    <location>
        <begin position="309"/>
        <end position="318"/>
    </location>
</feature>
<feature type="modified residue" description="Phosphoserine" evidence="1">
    <location>
        <position position="129"/>
    </location>
</feature>
<feature type="modified residue" description="Phosphoserine" evidence="1">
    <location>
        <position position="279"/>
    </location>
</feature>
<feature type="modified residue" description="Phosphoserine" evidence="1">
    <location>
        <position position="282"/>
    </location>
</feature>
<feature type="modified residue" description="Phosphoserine" evidence="1">
    <location>
        <position position="288"/>
    </location>
</feature>
<feature type="cross-link" description="Glycyl lysine isopeptide (Lys-Gly) (interchain with G-Cter in ubiquitin)" evidence="1">
    <location>
        <position position="314"/>
    </location>
</feature>
<reference key="1">
    <citation type="submission" date="2005-03" db="EMBL/GenBank/DDBJ databases">
        <title>Annotation of the Saccharomyces cerevisiae RM11-1a genome.</title>
        <authorList>
            <consortium name="The Broad Institute Genome Sequencing Platform"/>
            <person name="Birren B.W."/>
            <person name="Lander E.S."/>
            <person name="Galagan J.E."/>
            <person name="Nusbaum C."/>
            <person name="Devon K."/>
            <person name="Cuomo C."/>
            <person name="Jaffe D.B."/>
            <person name="Butler J."/>
            <person name="Alvarez P."/>
            <person name="Gnerre S."/>
            <person name="Grabherr M."/>
            <person name="Kleber M."/>
            <person name="Mauceli E.W."/>
            <person name="Brockman W."/>
            <person name="MacCallum I.A."/>
            <person name="Rounsley S."/>
            <person name="Young S.K."/>
            <person name="LaButti K."/>
            <person name="Pushparaj V."/>
            <person name="DeCaprio D."/>
            <person name="Crawford M."/>
            <person name="Koehrsen M."/>
            <person name="Engels R."/>
            <person name="Montgomery P."/>
            <person name="Pearson M."/>
            <person name="Howarth C."/>
            <person name="Larson L."/>
            <person name="Luoma S."/>
            <person name="White J."/>
            <person name="O'Leary S."/>
            <person name="Kodira C.D."/>
            <person name="Zeng Q."/>
            <person name="Yandava C."/>
            <person name="Alvarado L."/>
            <person name="Pratt S."/>
            <person name="Kruglyak L."/>
        </authorList>
    </citation>
    <scope>NUCLEOTIDE SEQUENCE [LARGE SCALE GENOMIC DNA]</scope>
    <source>
        <strain>RM11-1a</strain>
    </source>
</reference>
<dbReference type="EMBL" id="CH408055">
    <property type="protein sequence ID" value="EDV09595.1"/>
    <property type="molecule type" value="Genomic_DNA"/>
</dbReference>
<dbReference type="HOGENOM" id="CLU_061224_0_0_1"/>
<dbReference type="OrthoDB" id="39523at4893"/>
<dbReference type="Proteomes" id="UP000008335">
    <property type="component" value="Unassembled WGS sequence"/>
</dbReference>
<dbReference type="GO" id="GO:0005935">
    <property type="term" value="C:cellular bud neck"/>
    <property type="evidence" value="ECO:0007669"/>
    <property type="project" value="TreeGrafter"/>
</dbReference>
<dbReference type="GO" id="GO:0000324">
    <property type="term" value="C:fungal-type vacuole"/>
    <property type="evidence" value="ECO:0007669"/>
    <property type="project" value="TreeGrafter"/>
</dbReference>
<dbReference type="GO" id="GO:0016020">
    <property type="term" value="C:membrane"/>
    <property type="evidence" value="ECO:0007669"/>
    <property type="project" value="UniProtKB-SubCell"/>
</dbReference>
<dbReference type="InterPro" id="IPR051009">
    <property type="entry name" value="PRM"/>
</dbReference>
<dbReference type="PANTHER" id="PTHR36089">
    <property type="entry name" value="CHITIN SYNTHASE 3 COMPLEX PROTEIN CSI2-RELATED"/>
    <property type="match status" value="1"/>
</dbReference>
<dbReference type="PANTHER" id="PTHR36089:SF1">
    <property type="entry name" value="CHITIN SYNTHASE 3 COMPLEX PROTEIN CSI2-RELATED"/>
    <property type="match status" value="1"/>
</dbReference>
<name>PRM5_YEAS1</name>
<proteinExistence type="inferred from homology"/>
<sequence>MTVITIAKRGLPKLTTSTSSTTTASSSSTITSVASSSSSLPLLSNSTSSSIIPSITPPSRNGNPYILDSGDMPNGTVFIVVGGIAGVIFLAILLWWVITTYSSHRLTRSVQDYESKMFSTQHTQFYGDSPYMDYPAKENFQDQVHISESDISPGNKDESVKDALVSHTNNEKPFLSNFERPLSSLVSESNRNSLFISPTGDILYKTRLSKLYQESPRLLQKPVIMTSDNVSTNSLVSTISSSSASSLDNGNEKEVGEDIRKPAKIASSPSRKLLNSPESDGSVNRNHSKGNLLVVQSKRKPTPSTYLEHMLEGKEQDE</sequence>
<gene>
    <name type="primary">PRM5</name>
    <name type="ORF">SCRG_05289</name>
</gene>
<keyword id="KW-1017">Isopeptide bond</keyword>
<keyword id="KW-0472">Membrane</keyword>
<keyword id="KW-0597">Phosphoprotein</keyword>
<keyword id="KW-0812">Transmembrane</keyword>
<keyword id="KW-1133">Transmembrane helix</keyword>
<keyword id="KW-0832">Ubl conjugation</keyword>